<reference key="1">
    <citation type="journal article" date="2015" name="Genome Biol. Evol.">
        <title>Molecular diversity and gene evolution of the venom arsenal of Terebridae predatory marine snails.</title>
        <authorList>
            <person name="Gorson J."/>
            <person name="Ramrattan G."/>
            <person name="Verdes A."/>
            <person name="Wright E.M."/>
            <person name="Kantor Y."/>
            <person name="Rajaram Srinivasan R."/>
            <person name="Musunuri R."/>
            <person name="Packer D."/>
            <person name="Albano G."/>
            <person name="Qiu W.G."/>
            <person name="Holford M."/>
        </authorList>
    </citation>
    <scope>NUCLEOTIDE SEQUENCE [MRNA]</scope>
    <source>
        <tissue>Venom duct</tissue>
    </source>
</reference>
<comment type="subcellular location">
    <subcellularLocation>
        <location evidence="5">Secreted</location>
    </subcellularLocation>
</comment>
<comment type="tissue specificity">
    <text evidence="5">Expressed by the venom duct.</text>
</comment>
<comment type="domain">
    <text evidence="4">The cysteine framework is VI/VII (C-C-CC-C-C). Has the PXY motif between the first and the second Cys residues.</text>
</comment>
<comment type="PTM">
    <text evidence="4">Contains 3 disulfide bonds.</text>
</comment>
<keyword id="KW-0165">Cleavage on pair of basic residues</keyword>
<keyword id="KW-1015">Disulfide bond</keyword>
<keyword id="KW-0964">Secreted</keyword>
<keyword id="KW-0732">Signal</keyword>
<keyword id="KW-0800">Toxin</keyword>
<feature type="signal peptide" evidence="1">
    <location>
        <begin position="1"/>
        <end position="21"/>
    </location>
</feature>
<feature type="propeptide" id="PRO_0000435076" evidence="4">
    <location>
        <begin position="22"/>
        <end position="44"/>
    </location>
</feature>
<feature type="chain" id="PRO_0000435077" description="Teretoxin Tan6.8">
    <location>
        <begin position="45"/>
        <end position="89"/>
    </location>
</feature>
<feature type="region of interest" description="Disordered" evidence="2">
    <location>
        <begin position="22"/>
        <end position="42"/>
    </location>
</feature>
<accession>P0DN55</accession>
<name>T68_TERAN</name>
<protein>
    <recommendedName>
        <fullName evidence="3">Teretoxin Tan6.8</fullName>
    </recommendedName>
</protein>
<organism>
    <name type="scientific">Terebra anilis</name>
    <name type="common">Auger snail</name>
    <name type="synonym">Cinguloterebra anilis</name>
    <dbReference type="NCBI Taxonomy" id="553697"/>
    <lineage>
        <taxon>Eukaryota</taxon>
        <taxon>Metazoa</taxon>
        <taxon>Spiralia</taxon>
        <taxon>Lophotrochozoa</taxon>
        <taxon>Mollusca</taxon>
        <taxon>Gastropoda</taxon>
        <taxon>Caenogastropoda</taxon>
        <taxon>Neogastropoda</taxon>
        <taxon>Conoidea</taxon>
        <taxon>Terebridae</taxon>
        <taxon>Terebra</taxon>
    </lineage>
</organism>
<dbReference type="GO" id="GO:0005576">
    <property type="term" value="C:extracellular region"/>
    <property type="evidence" value="ECO:0007669"/>
    <property type="project" value="UniProtKB-SubCell"/>
</dbReference>
<dbReference type="GO" id="GO:0090729">
    <property type="term" value="F:toxin activity"/>
    <property type="evidence" value="ECO:0007669"/>
    <property type="project" value="UniProtKB-KW"/>
</dbReference>
<sequence length="89" mass="9836">MRLLLILLLLTPVILAGSLDEEPNNADGANAASFTADQEGRHKRSLDVVLKEDGCPKYCSSDSDCCIRDRCLYIPQTGKQECMYKGPFL</sequence>
<proteinExistence type="inferred from homology"/>
<evidence type="ECO:0000255" key="1"/>
<evidence type="ECO:0000256" key="2">
    <source>
        <dbReference type="SAM" id="MobiDB-lite"/>
    </source>
</evidence>
<evidence type="ECO:0000303" key="3">
    <source>
    </source>
</evidence>
<evidence type="ECO:0000305" key="4"/>
<evidence type="ECO:0000305" key="5">
    <source>
    </source>
</evidence>